<comment type="function">
    <text evidence="1">Pyrophosphatase that catalyzes the hydrolysis of nucleoside triphosphates to their monophosphate derivatives, with a high preference for the non-canonical purine nucleotides XTP (xanthosine triphosphate), dITP (deoxyinosine triphosphate) and ITP. Seems to function as a house-cleaning enzyme that removes non-canonical purine nucleotides from the nucleotide pool, thus preventing their incorporation into DNA/RNA and avoiding chromosomal lesions.</text>
</comment>
<comment type="catalytic activity">
    <reaction evidence="1">
        <text>XTP + H2O = XMP + diphosphate + H(+)</text>
        <dbReference type="Rhea" id="RHEA:28610"/>
        <dbReference type="ChEBI" id="CHEBI:15377"/>
        <dbReference type="ChEBI" id="CHEBI:15378"/>
        <dbReference type="ChEBI" id="CHEBI:33019"/>
        <dbReference type="ChEBI" id="CHEBI:57464"/>
        <dbReference type="ChEBI" id="CHEBI:61314"/>
        <dbReference type="EC" id="3.6.1.66"/>
    </reaction>
</comment>
<comment type="catalytic activity">
    <reaction evidence="1">
        <text>dITP + H2O = dIMP + diphosphate + H(+)</text>
        <dbReference type="Rhea" id="RHEA:28342"/>
        <dbReference type="ChEBI" id="CHEBI:15377"/>
        <dbReference type="ChEBI" id="CHEBI:15378"/>
        <dbReference type="ChEBI" id="CHEBI:33019"/>
        <dbReference type="ChEBI" id="CHEBI:61194"/>
        <dbReference type="ChEBI" id="CHEBI:61382"/>
        <dbReference type="EC" id="3.6.1.66"/>
    </reaction>
</comment>
<comment type="catalytic activity">
    <reaction evidence="1">
        <text>ITP + H2O = IMP + diphosphate + H(+)</text>
        <dbReference type="Rhea" id="RHEA:29399"/>
        <dbReference type="ChEBI" id="CHEBI:15377"/>
        <dbReference type="ChEBI" id="CHEBI:15378"/>
        <dbReference type="ChEBI" id="CHEBI:33019"/>
        <dbReference type="ChEBI" id="CHEBI:58053"/>
        <dbReference type="ChEBI" id="CHEBI:61402"/>
        <dbReference type="EC" id="3.6.1.66"/>
    </reaction>
</comment>
<comment type="cofactor">
    <cofactor evidence="1">
        <name>Mg(2+)</name>
        <dbReference type="ChEBI" id="CHEBI:18420"/>
    </cofactor>
    <text evidence="1">Binds 1 Mg(2+) ion per subunit.</text>
</comment>
<comment type="subunit">
    <text evidence="1">Homodimer.</text>
</comment>
<comment type="similarity">
    <text evidence="1">Belongs to the HAM1 NTPase family.</text>
</comment>
<keyword id="KW-0378">Hydrolase</keyword>
<keyword id="KW-0460">Magnesium</keyword>
<keyword id="KW-0479">Metal-binding</keyword>
<keyword id="KW-0546">Nucleotide metabolism</keyword>
<keyword id="KW-0547">Nucleotide-binding</keyword>
<keyword id="KW-1185">Reference proteome</keyword>
<name>IXTPA_DEIDV</name>
<feature type="chain" id="PRO_1000215201" description="dITP/XTP pyrophosphatase">
    <location>
        <begin position="1"/>
        <end position="208"/>
    </location>
</feature>
<feature type="active site" description="Proton acceptor" evidence="1">
    <location>
        <position position="75"/>
    </location>
</feature>
<feature type="binding site" evidence="1">
    <location>
        <begin position="16"/>
        <end position="21"/>
    </location>
    <ligand>
        <name>substrate</name>
    </ligand>
</feature>
<feature type="binding site" evidence="1">
    <location>
        <position position="46"/>
    </location>
    <ligand>
        <name>Mg(2+)</name>
        <dbReference type="ChEBI" id="CHEBI:18420"/>
    </ligand>
</feature>
<feature type="binding site" evidence="1">
    <location>
        <position position="75"/>
    </location>
    <ligand>
        <name>Mg(2+)</name>
        <dbReference type="ChEBI" id="CHEBI:18420"/>
    </ligand>
</feature>
<feature type="binding site" evidence="1">
    <location>
        <position position="76"/>
    </location>
    <ligand>
        <name>substrate</name>
    </ligand>
</feature>
<feature type="binding site" evidence="1">
    <location>
        <begin position="155"/>
        <end position="158"/>
    </location>
    <ligand>
        <name>substrate</name>
    </ligand>
</feature>
<feature type="binding site" evidence="1">
    <location>
        <position position="178"/>
    </location>
    <ligand>
        <name>substrate</name>
    </ligand>
</feature>
<feature type="binding site" evidence="1">
    <location>
        <begin position="183"/>
        <end position="184"/>
    </location>
    <ligand>
        <name>substrate</name>
    </ligand>
</feature>
<proteinExistence type="inferred from homology"/>
<protein>
    <recommendedName>
        <fullName evidence="1">dITP/XTP pyrophosphatase</fullName>
        <ecNumber evidence="1">3.6.1.66</ecNumber>
    </recommendedName>
    <alternativeName>
        <fullName evidence="1">Non-canonical purine NTP pyrophosphatase</fullName>
    </alternativeName>
    <alternativeName>
        <fullName evidence="1">Non-standard purine NTP pyrophosphatase</fullName>
    </alternativeName>
    <alternativeName>
        <fullName evidence="1">Nucleoside-triphosphate diphosphatase</fullName>
    </alternativeName>
    <alternativeName>
        <fullName evidence="1">Nucleoside-triphosphate pyrophosphatase</fullName>
        <shortName evidence="1">NTPase</shortName>
    </alternativeName>
</protein>
<dbReference type="EC" id="3.6.1.66" evidence="1"/>
<dbReference type="EMBL" id="CP001114">
    <property type="protein sequence ID" value="ACO46932.2"/>
    <property type="molecule type" value="Genomic_DNA"/>
</dbReference>
<dbReference type="RefSeq" id="WP_041227237.1">
    <property type="nucleotide sequence ID" value="NC_012526.1"/>
</dbReference>
<dbReference type="SMR" id="C1CXX6"/>
<dbReference type="STRING" id="546414.Deide_19360"/>
<dbReference type="PaxDb" id="546414-Deide_19360"/>
<dbReference type="KEGG" id="ddr:Deide_19360"/>
<dbReference type="eggNOG" id="COG0127">
    <property type="taxonomic scope" value="Bacteria"/>
</dbReference>
<dbReference type="HOGENOM" id="CLU_082080_0_2_0"/>
<dbReference type="OrthoDB" id="9807456at2"/>
<dbReference type="Proteomes" id="UP000002208">
    <property type="component" value="Chromosome"/>
</dbReference>
<dbReference type="GO" id="GO:0005829">
    <property type="term" value="C:cytosol"/>
    <property type="evidence" value="ECO:0007669"/>
    <property type="project" value="TreeGrafter"/>
</dbReference>
<dbReference type="GO" id="GO:0035870">
    <property type="term" value="F:dITP diphosphatase activity"/>
    <property type="evidence" value="ECO:0007669"/>
    <property type="project" value="RHEA"/>
</dbReference>
<dbReference type="GO" id="GO:0036220">
    <property type="term" value="F:ITP diphosphatase activity"/>
    <property type="evidence" value="ECO:0007669"/>
    <property type="project" value="UniProtKB-EC"/>
</dbReference>
<dbReference type="GO" id="GO:0046872">
    <property type="term" value="F:metal ion binding"/>
    <property type="evidence" value="ECO:0007669"/>
    <property type="project" value="UniProtKB-KW"/>
</dbReference>
<dbReference type="GO" id="GO:0000166">
    <property type="term" value="F:nucleotide binding"/>
    <property type="evidence" value="ECO:0007669"/>
    <property type="project" value="UniProtKB-KW"/>
</dbReference>
<dbReference type="GO" id="GO:0017111">
    <property type="term" value="F:ribonucleoside triphosphate phosphatase activity"/>
    <property type="evidence" value="ECO:0007669"/>
    <property type="project" value="InterPro"/>
</dbReference>
<dbReference type="GO" id="GO:0036222">
    <property type="term" value="F:XTP diphosphatase activity"/>
    <property type="evidence" value="ECO:0007669"/>
    <property type="project" value="RHEA"/>
</dbReference>
<dbReference type="GO" id="GO:0009117">
    <property type="term" value="P:nucleotide metabolic process"/>
    <property type="evidence" value="ECO:0007669"/>
    <property type="project" value="UniProtKB-KW"/>
</dbReference>
<dbReference type="GO" id="GO:0009146">
    <property type="term" value="P:purine nucleoside triphosphate catabolic process"/>
    <property type="evidence" value="ECO:0007669"/>
    <property type="project" value="UniProtKB-UniRule"/>
</dbReference>
<dbReference type="CDD" id="cd00515">
    <property type="entry name" value="HAM1"/>
    <property type="match status" value="1"/>
</dbReference>
<dbReference type="FunFam" id="3.90.950.10:FF:000001">
    <property type="entry name" value="dITP/XTP pyrophosphatase"/>
    <property type="match status" value="1"/>
</dbReference>
<dbReference type="Gene3D" id="3.90.950.10">
    <property type="match status" value="1"/>
</dbReference>
<dbReference type="HAMAP" id="MF_01405">
    <property type="entry name" value="Non_canon_purine_NTPase"/>
    <property type="match status" value="1"/>
</dbReference>
<dbReference type="InterPro" id="IPR020922">
    <property type="entry name" value="dITP/XTP_pyrophosphatase"/>
</dbReference>
<dbReference type="InterPro" id="IPR029001">
    <property type="entry name" value="ITPase-like_fam"/>
</dbReference>
<dbReference type="InterPro" id="IPR002637">
    <property type="entry name" value="RdgB/HAM1"/>
</dbReference>
<dbReference type="NCBIfam" id="TIGR00042">
    <property type="entry name" value="RdgB/HAM1 family non-canonical purine NTP pyrophosphatase"/>
    <property type="match status" value="1"/>
</dbReference>
<dbReference type="PANTHER" id="PTHR11067:SF9">
    <property type="entry name" value="INOSINE TRIPHOSPHATE PYROPHOSPHATASE"/>
    <property type="match status" value="1"/>
</dbReference>
<dbReference type="PANTHER" id="PTHR11067">
    <property type="entry name" value="INOSINE TRIPHOSPHATE PYROPHOSPHATASE/HAM1 PROTEIN"/>
    <property type="match status" value="1"/>
</dbReference>
<dbReference type="Pfam" id="PF01725">
    <property type="entry name" value="Ham1p_like"/>
    <property type="match status" value="1"/>
</dbReference>
<dbReference type="SUPFAM" id="SSF52972">
    <property type="entry name" value="ITPase-like"/>
    <property type="match status" value="1"/>
</dbReference>
<sequence>MTEGVGLKGRQVVVATGNAGKVREIEQALAGLDWRLTGLGSVTLPEETGATYEENAALKACAAAVACGLPALADDSGLEVEALDGQPGVYSARFGNRPNDRERNLYLLEKLRGETNRRAKFVSVVILAYPDGHLETYRGEMTGQLLEGPRGENGFGYDPLFVPDGETRSLAEMTVEEKRAISHRGRALAALQAAHKDGLPPRQVSVID</sequence>
<organism>
    <name type="scientific">Deinococcus deserti (strain DSM 17065 / CIP 109153 / LMG 22923 / VCD115)</name>
    <dbReference type="NCBI Taxonomy" id="546414"/>
    <lineage>
        <taxon>Bacteria</taxon>
        <taxon>Thermotogati</taxon>
        <taxon>Deinococcota</taxon>
        <taxon>Deinococci</taxon>
        <taxon>Deinococcales</taxon>
        <taxon>Deinococcaceae</taxon>
        <taxon>Deinococcus</taxon>
    </lineage>
</organism>
<evidence type="ECO:0000255" key="1">
    <source>
        <dbReference type="HAMAP-Rule" id="MF_01405"/>
    </source>
</evidence>
<reference key="1">
    <citation type="journal article" date="2009" name="PLoS Genet.">
        <title>Alliance of proteomics and genomics to unravel the specificities of Sahara bacterium Deinococcus deserti.</title>
        <authorList>
            <person name="de Groot A."/>
            <person name="Dulermo R."/>
            <person name="Ortet P."/>
            <person name="Blanchard L."/>
            <person name="Guerin P."/>
            <person name="Fernandez B."/>
            <person name="Vacherie B."/>
            <person name="Dossat C."/>
            <person name="Jolivet E."/>
            <person name="Siguier P."/>
            <person name="Chandler M."/>
            <person name="Barakat M."/>
            <person name="Dedieu A."/>
            <person name="Barbe V."/>
            <person name="Heulin T."/>
            <person name="Sommer S."/>
            <person name="Achouak W."/>
            <person name="Armengaud J."/>
        </authorList>
    </citation>
    <scope>NUCLEOTIDE SEQUENCE [LARGE SCALE GENOMIC DNA]</scope>
    <source>
        <strain>DSM 17065 / CIP 109153 / LMG 22923 / VCD115</strain>
    </source>
</reference>
<gene>
    <name type="ordered locus">Deide_19360</name>
</gene>
<accession>C1CXX6</accession>